<keyword id="KW-0025">Alternative splicing</keyword>
<keyword id="KW-0067">ATP-binding</keyword>
<keyword id="KW-0963">Cytoplasm</keyword>
<keyword id="KW-0217">Developmental protein</keyword>
<keyword id="KW-0221">Differentiation</keyword>
<keyword id="KW-0418">Kinase</keyword>
<keyword id="KW-0469">Meiosis</keyword>
<keyword id="KW-0547">Nucleotide-binding</keyword>
<keyword id="KW-0539">Nucleus</keyword>
<keyword id="KW-0597">Phosphoprotein</keyword>
<keyword id="KW-1185">Reference proteome</keyword>
<keyword id="KW-0723">Serine/threonine-protein kinase</keyword>
<keyword id="KW-0744">Spermatogenesis</keyword>
<keyword id="KW-0808">Transferase</keyword>
<name>GCK3_CAEEL</name>
<reference evidence="10" key="1">
    <citation type="journal article" date="2005" name="J. Gen. Physiol.">
        <title>GCK-3, a newly identified Ste20 kinase, binds to and regulates the activity of a cell cycle-dependent ClC anion channel.</title>
        <authorList>
            <person name="Denton J."/>
            <person name="Nehrke K."/>
            <person name="Yin X."/>
            <person name="Morrison R."/>
            <person name="Strange K."/>
        </authorList>
    </citation>
    <scope>NUCLEOTIDE SEQUENCE [MRNA] (ISOFORM A)</scope>
    <scope>FUNCTION</scope>
    <scope>INTERACTION WITH CLH-3</scope>
</reference>
<reference evidence="11" key="2">
    <citation type="journal article" date="1998" name="Science">
        <title>Genome sequence of the nematode C. elegans: a platform for investigating biology.</title>
        <authorList>
            <consortium name="The C. elegans sequencing consortium"/>
        </authorList>
    </citation>
    <scope>NUCLEOTIDE SEQUENCE [LARGE SCALE GENOMIC DNA]</scope>
    <source>
        <strain evidence="11">Bristol N2</strain>
    </source>
</reference>
<reference evidence="9" key="3">
    <citation type="journal article" date="2007" name="Am. J. Physiol.">
        <title>Evolutionarily conserved WNK and Ste20 kinases are essential for acute volume recovery and survival after hypertonic shrinkage in Caenorhabditis elegans.</title>
        <authorList>
            <person name="Choe K.P."/>
            <person name="Strange K."/>
        </authorList>
    </citation>
    <scope>FUNCTION</scope>
    <scope>INTERACTION WITH WNK-1</scope>
    <scope>DISRUPTION PHENOTYPE</scope>
</reference>
<reference evidence="9" key="4">
    <citation type="journal article" date="2008" name="EMBO Rep.">
        <title>Caenorhabditis elegans WNK-STE20 pathway regulates tube formation by modulating ClC channel activity.</title>
        <authorList>
            <person name="Hisamoto N."/>
            <person name="Moriguchi T."/>
            <person name="Urushiyama S."/>
            <person name="Mitani S."/>
            <person name="Shibuya H."/>
            <person name="Matsumoto K."/>
        </authorList>
    </citation>
    <scope>FUNCTION</scope>
    <scope>CATALYTIC ACTIVITY</scope>
    <scope>INTERACTION WITH WNK-1</scope>
    <scope>PHOSPHORYLATION AT THR-280 AND SER-419</scope>
    <scope>MUTAGENESIS OF THR-280 AND SER-419</scope>
</reference>
<reference evidence="9" key="5">
    <citation type="journal article" date="2010" name="Dev. Biol.">
        <title>The Caenorhabditis elegans Ste20 kinase, GCK-3, is essential for postembryonic developmental timing and regulates meiotic chromosome segregation.</title>
        <authorList>
            <person name="Kupinski A.P."/>
            <person name="Muller-Reichert T."/>
            <person name="Eckmann C.R."/>
        </authorList>
    </citation>
    <scope>FUNCTION</scope>
    <scope>CATALYTIC ACTIVITY</scope>
    <scope>SUBCELLULAR LOCATION</scope>
    <scope>TISSUE SPECIFICITY</scope>
    <scope>DISRUPTION PHENOTYPE</scope>
    <scope>PHOSPHORYLATION AT THR-13; THR-32; SER-190 AND SER-405</scope>
    <scope>IDENTIFICATION BY MASS SPECTROMETRY</scope>
    <scope>MUTAGENESIS OF LYS-137</scope>
</reference>
<reference key="6">
    <citation type="journal article" date="2012" name="Am. J. Physiol.">
        <title>GCN-2 dependent inhibition of protein synthesis activates osmosensitive gene transcription via WNK and Ste20 kinase signaling.</title>
        <authorList>
            <person name="Lee E.C."/>
            <person name="Strange K."/>
        </authorList>
    </citation>
    <scope>FUNCTION</scope>
</reference>
<organism evidence="11">
    <name type="scientific">Caenorhabditis elegans</name>
    <dbReference type="NCBI Taxonomy" id="6239"/>
    <lineage>
        <taxon>Eukaryota</taxon>
        <taxon>Metazoa</taxon>
        <taxon>Ecdysozoa</taxon>
        <taxon>Nematoda</taxon>
        <taxon>Chromadorea</taxon>
        <taxon>Rhabditida</taxon>
        <taxon>Rhabditina</taxon>
        <taxon>Rhabditomorpha</taxon>
        <taxon>Rhabditoidea</taxon>
        <taxon>Rhabditidae</taxon>
        <taxon>Peloderinae</taxon>
        <taxon>Caenorhabditis</taxon>
    </lineage>
</organism>
<feature type="chain" id="PRO_0000432620" description="Germinal center kinase 3">
    <location>
        <begin position="1"/>
        <end position="596"/>
    </location>
</feature>
<feature type="domain" description="Protein kinase" evidence="1">
    <location>
        <begin position="108"/>
        <end position="386"/>
    </location>
</feature>
<feature type="region of interest" description="Disordered" evidence="2">
    <location>
        <begin position="1"/>
        <end position="80"/>
    </location>
</feature>
<feature type="region of interest" description="Disordered" evidence="2">
    <location>
        <begin position="429"/>
        <end position="496"/>
    </location>
</feature>
<feature type="compositionally biased region" description="Low complexity" evidence="2">
    <location>
        <begin position="1"/>
        <end position="54"/>
    </location>
</feature>
<feature type="compositionally biased region" description="Pro residues" evidence="2">
    <location>
        <begin position="67"/>
        <end position="77"/>
    </location>
</feature>
<feature type="compositionally biased region" description="Acidic residues" evidence="2">
    <location>
        <begin position="432"/>
        <end position="450"/>
    </location>
</feature>
<feature type="compositionally biased region" description="Gly residues" evidence="2">
    <location>
        <begin position="466"/>
        <end position="479"/>
    </location>
</feature>
<feature type="active site" description="Proton acceptor" evidence="1">
    <location>
        <position position="240"/>
    </location>
</feature>
<feature type="binding site" evidence="1">
    <location>
        <begin position="114"/>
        <end position="122"/>
    </location>
    <ligand>
        <name>ATP</name>
        <dbReference type="ChEBI" id="CHEBI:30616"/>
    </ligand>
</feature>
<feature type="binding site" evidence="1">
    <location>
        <position position="137"/>
    </location>
    <ligand>
        <name>ATP</name>
        <dbReference type="ChEBI" id="CHEBI:30616"/>
    </ligand>
</feature>
<feature type="modified residue" description="Phosphothreonine; by autocatalysis" evidence="6">
    <location>
        <position position="13"/>
    </location>
</feature>
<feature type="modified residue" description="Phosphothreonine; by autocatalysis" evidence="6">
    <location>
        <position position="32"/>
    </location>
</feature>
<feature type="modified residue" description="Phosphoserine; by autocatalysis" evidence="6">
    <location>
        <position position="190"/>
    </location>
</feature>
<feature type="modified residue" description="Phosphothreonine" evidence="5">
    <location>
        <position position="280"/>
    </location>
</feature>
<feature type="modified residue" description="Phosphoserine; by autocatalysis" evidence="6">
    <location>
        <position position="405"/>
    </location>
</feature>
<feature type="modified residue" description="Phosphoserine" evidence="5">
    <location>
        <position position="419"/>
    </location>
</feature>
<feature type="splice variant" id="VSP_057536" description="In isoform b." evidence="9">
    <location>
        <begin position="1"/>
        <end position="157"/>
    </location>
</feature>
<feature type="splice variant" id="VSP_057537" description="In isoform c." evidence="9">
    <original>VEGIAHELVTAELIDC</original>
    <variation>GTEYFTKSKIYCEARE</variation>
    <location>
        <begin position="526"/>
        <end position="541"/>
    </location>
</feature>
<feature type="splice variant" id="VSP_057538" description="In isoform c." evidence="9">
    <location>
        <begin position="542"/>
        <end position="596"/>
    </location>
</feature>
<feature type="mutagenesis site" description="Loss of activity." evidence="5 6">
    <original>K</original>
    <variation>R</variation>
    <variation>M</variation>
    <location>
        <position position="137"/>
    </location>
</feature>
<feature type="mutagenesis site" description="Partial loss of activity." evidence="5">
    <original>T</original>
    <variation>A</variation>
    <location>
        <position position="280"/>
    </location>
</feature>
<feature type="mutagenesis site" description="Increase in activity." evidence="5">
    <original>T</original>
    <variation>E</variation>
    <location>
        <position position="280"/>
    </location>
</feature>
<feature type="mutagenesis site" description="Abolishes phosphorylation by wnk-1. No effect on activity." evidence="5">
    <original>S</original>
    <variation>A</variation>
    <variation>D</variation>
    <location>
        <position position="419"/>
    </location>
</feature>
<sequence>MSSSNLAGNTNTTTTSSAASAAAAHSAANASTITSEYSTTQTTTGTFNTDTLSSIGSTSTLHGSQPSQPPPPPPPQVSSPIAAAAAASAALVAQLNPADRWPTEPSAYKLDESIGVGATATVFTAYCLPRNEKVAIKCINLEKCQTSVDELSHEIQAMSQCNHPNVVSYYTSFIAQEELWVVMRLLNCGSMLDILKRKVKAIGKEQAQFGVLDEVSIATVLREVLKGLEYFHLNGQIHRDIKAGNILLADDGTIQIADFGVSGWLASSGGDLSRQKVRHTFVGTPCWMAPEVMEQVQGYDFKADIWSLGILAIELATGTAPYHKYPPMKVLMLTLQNDPPTLETNAERKDQYKAYGKSFKTLIRDCLQKDPAKRPTASELLKYSFFKKGKDKKYLVHTLIENLASVPVVAHHSSKKVASGKLRKDAHGNWEFEYDSPQESDDDSDLEDEEREKKKKKASASASGAGAAGAAGGATGGAASGAPSAQEGGGATTPCPETLNMVLRVRNQQRELNDIKFDYTKSADTVEGIAHELVTAELIDCHDLVIVAANLQKLIDFAESKSDRRSITFALNSGVHANEIPDERTLTGFAQISLLD</sequence>
<comment type="function">
    <text evidence="3 4 5 6 7">Plays a role in osmotic stress responses by regulating ion homeostasis and by controlling cell volume via the phosphorylation-mediated inhibition of the chloride channel clh-3 (PubMed:15684092, PubMed:17596296). In addition, increases gpdh-1 translation upon osmotic stress, likely downstream of wnk-1 (PubMed:23076791). Involved in several developmental processes including the tubular formation of the excretory canals, the formation of the intestine and the progression through larval stages (PubMed:20595048). In addition, required for germ line development by controlling meiosis and chromosomal segregation during spermatogenesis. By controlling clh-3 activity, may regulate the development of the excretory canals and fertility (PubMed:18049475).</text>
</comment>
<comment type="catalytic activity">
    <reaction evidence="5 6">
        <text>L-seryl-[protein] + ATP = O-phospho-L-seryl-[protein] + ADP + H(+)</text>
        <dbReference type="Rhea" id="RHEA:17989"/>
        <dbReference type="Rhea" id="RHEA-COMP:9863"/>
        <dbReference type="Rhea" id="RHEA-COMP:11604"/>
        <dbReference type="ChEBI" id="CHEBI:15378"/>
        <dbReference type="ChEBI" id="CHEBI:29999"/>
        <dbReference type="ChEBI" id="CHEBI:30616"/>
        <dbReference type="ChEBI" id="CHEBI:83421"/>
        <dbReference type="ChEBI" id="CHEBI:456216"/>
        <dbReference type="EC" id="2.7.11.1"/>
    </reaction>
</comment>
<comment type="catalytic activity">
    <reaction evidence="5 6">
        <text>L-threonyl-[protein] + ATP = O-phospho-L-threonyl-[protein] + ADP + H(+)</text>
        <dbReference type="Rhea" id="RHEA:46608"/>
        <dbReference type="Rhea" id="RHEA-COMP:11060"/>
        <dbReference type="Rhea" id="RHEA-COMP:11605"/>
        <dbReference type="ChEBI" id="CHEBI:15378"/>
        <dbReference type="ChEBI" id="CHEBI:30013"/>
        <dbReference type="ChEBI" id="CHEBI:30616"/>
        <dbReference type="ChEBI" id="CHEBI:61977"/>
        <dbReference type="ChEBI" id="CHEBI:456216"/>
        <dbReference type="EC" id="2.7.11.1"/>
    </reaction>
</comment>
<comment type="subunit">
    <text evidence="3 4 5">Interacts (via C-terminus) with clh-3; required for the phosphorylation-mediated inhibition of clh-3 function (PubMed:15684092). Interacts (via C-terminus) with wnk-1; the interaction is direct (PubMed:17596296, PubMed:18049475).</text>
</comment>
<comment type="interaction">
    <interactant intactId="EBI-7713242">
        <id>G5EEN4</id>
    </interactant>
    <interactant intactId="EBI-6540721">
        <id>X5M5N0</id>
        <label>wnk-1</label>
    </interactant>
    <organismsDiffer>false</organismsDiffer>
    <experiments>3</experiments>
</comment>
<comment type="subcellular location">
    <subcellularLocation>
        <location evidence="6">Cytoplasm</location>
    </subcellularLocation>
    <subcellularLocation>
        <location evidence="6">Nucleus</location>
    </subcellularLocation>
    <text evidence="6">Localizes in the nucleus in intestinal cells.</text>
</comment>
<comment type="alternative products">
    <event type="alternative splicing"/>
    <isoform>
        <id>G5EEN4-1</id>
        <name evidence="12">a</name>
        <sequence type="displayed"/>
    </isoform>
    <isoform>
        <id>G5EEN4-2</id>
        <name evidence="13">b</name>
        <sequence type="described" ref="VSP_057536"/>
    </isoform>
    <isoform>
        <id>G5EEN4-3</id>
        <name evidence="14">c</name>
        <sequence type="described" ref="VSP_057537 VSP_057538"/>
    </isoform>
</comment>
<comment type="tissue specificity">
    <text evidence="6">Ubiquitously expressed with a higher expression in the excretory cell. Expressed in both male and female germ cells; up-regulated in maturing spermatocytes but absent in mature sperm.</text>
</comment>
<comment type="developmental stage">
    <text evidence="6">Expressed at all stages.</text>
</comment>
<comment type="PTM">
    <text evidence="5 6">Phosphorylated at Thr-280 and Ser-419 probably by wnk-1; phosphorylation results in weak activation (PubMed:18049475). Predominantly autophosphorylated at Thr-32 and Ser-190 and weakly autophosphorylated at Thr-13 and Ser-405 in vitro (PubMed:20595048).</text>
</comment>
<comment type="disruption phenotype">
    <text evidence="4 6">Hermaphrodites arrest after the first molt and die after at most 6 days. Most animals appear L2-like with morphologies of gonads and vulva that are out of step with the developmental stage. Mutants have a dilated intestinal lumen with extensive internal folding associated with the accumulation of undigested bacteria and a shortened excretory canal. Some animals have adult-type alae and are sterile with vulva and germ line formation defects (PubMed:20595048). In RNAi-mediated knockdown, impaired survival and slower volume recovery upon hypertonic stress (PubMed:17596296).</text>
</comment>
<comment type="similarity">
    <text evidence="9">Belongs to the protein kinase superfamily. STE Ser/Thr protein kinase family. STE20 subfamily.</text>
</comment>
<protein>
    <recommendedName>
        <fullName evidence="8">Germinal center kinase 3</fullName>
        <ecNumber evidence="5 6">2.7.11.1</ecNumber>
    </recommendedName>
    <alternativeName>
        <fullName evidence="10">STE20-like serine/threonine kinase</fullName>
    </alternativeName>
</protein>
<gene>
    <name evidence="12" type="primary">gck-3</name>
    <name evidence="12" type="ORF">Y59A8B.23</name>
</gene>
<proteinExistence type="evidence at protein level"/>
<evidence type="ECO:0000255" key="1">
    <source>
        <dbReference type="PROSITE-ProRule" id="PRU00159"/>
    </source>
</evidence>
<evidence type="ECO:0000256" key="2">
    <source>
        <dbReference type="SAM" id="MobiDB-lite"/>
    </source>
</evidence>
<evidence type="ECO:0000269" key="3">
    <source>
    </source>
</evidence>
<evidence type="ECO:0000269" key="4">
    <source>
    </source>
</evidence>
<evidence type="ECO:0000269" key="5">
    <source>
    </source>
</evidence>
<evidence type="ECO:0000269" key="6">
    <source>
    </source>
</evidence>
<evidence type="ECO:0000269" key="7">
    <source>
    </source>
</evidence>
<evidence type="ECO:0000303" key="8">
    <source>
    </source>
</evidence>
<evidence type="ECO:0000305" key="9"/>
<evidence type="ECO:0000312" key="10">
    <source>
        <dbReference type="EMBL" id="AAU89102.1"/>
    </source>
</evidence>
<evidence type="ECO:0000312" key="11">
    <source>
        <dbReference type="Proteomes" id="UP000001940"/>
    </source>
</evidence>
<evidence type="ECO:0000312" key="12">
    <source>
        <dbReference type="WormBase" id="Y59A8B.23a"/>
    </source>
</evidence>
<evidence type="ECO:0000312" key="13">
    <source>
        <dbReference type="WormBase" id="Y59A8B.23b"/>
    </source>
</evidence>
<evidence type="ECO:0000312" key="14">
    <source>
        <dbReference type="WormBase" id="Y59A8B.23c"/>
    </source>
</evidence>
<dbReference type="EC" id="2.7.11.1" evidence="5 6"/>
<dbReference type="EMBL" id="AY741200">
    <property type="protein sequence ID" value="AAU89102.1"/>
    <property type="molecule type" value="mRNA"/>
</dbReference>
<dbReference type="EMBL" id="AL132898">
    <property type="protein sequence ID" value="CAC14417.2"/>
    <property type="molecule type" value="Genomic_DNA"/>
</dbReference>
<dbReference type="EMBL" id="AL132898">
    <property type="protein sequence ID" value="CAR64690.1"/>
    <property type="molecule type" value="Genomic_DNA"/>
</dbReference>
<dbReference type="EMBL" id="AL132898">
    <property type="protein sequence ID" value="CCC42211.1"/>
    <property type="molecule type" value="Genomic_DNA"/>
</dbReference>
<dbReference type="RefSeq" id="NP_001129918.1">
    <molecule id="G5EEN4-2"/>
    <property type="nucleotide sequence ID" value="NM_001136446.4"/>
</dbReference>
<dbReference type="RefSeq" id="NP_001256762.1">
    <property type="nucleotide sequence ID" value="NM_001269833.1"/>
</dbReference>
<dbReference type="RefSeq" id="NP_001379534.1">
    <molecule id="G5EEN4-3"/>
    <property type="nucleotide sequence ID" value="NM_001392687.1"/>
</dbReference>
<dbReference type="RefSeq" id="NP_507517.2">
    <molecule id="G5EEN4-1"/>
    <property type="nucleotide sequence ID" value="NM_075116.7"/>
</dbReference>
<dbReference type="SMR" id="G5EEN4"/>
<dbReference type="FunCoup" id="G5EEN4">
    <property type="interactions" value="2901"/>
</dbReference>
<dbReference type="IntAct" id="G5EEN4">
    <property type="interactions" value="1"/>
</dbReference>
<dbReference type="MINT" id="G5EEN4"/>
<dbReference type="STRING" id="6239.Y59A8B.23a.1"/>
<dbReference type="iPTMnet" id="G5EEN4"/>
<dbReference type="PaxDb" id="6239-Y59A8B.23a.1"/>
<dbReference type="PeptideAtlas" id="G5EEN4"/>
<dbReference type="EnsemblMetazoa" id="Y59A8B.23a.1">
    <molecule id="G5EEN4-1"/>
    <property type="protein sequence ID" value="Y59A8B.23a.1"/>
    <property type="gene ID" value="WBGene00013355"/>
</dbReference>
<dbReference type="EnsemblMetazoa" id="Y59A8B.23b.1">
    <molecule id="G5EEN4-2"/>
    <property type="protein sequence ID" value="Y59A8B.23b.1"/>
    <property type="gene ID" value="WBGene00013355"/>
</dbReference>
<dbReference type="EnsemblMetazoa" id="Y59A8B.23c.1">
    <molecule id="G5EEN4-3"/>
    <property type="protein sequence ID" value="Y59A8B.23c.1"/>
    <property type="gene ID" value="WBGene00013355"/>
</dbReference>
<dbReference type="GeneID" id="190400"/>
<dbReference type="KEGG" id="cel:CELE_Y59A8B.23"/>
<dbReference type="AGR" id="WB:WBGene00013355"/>
<dbReference type="CTD" id="190400"/>
<dbReference type="WormBase" id="Y59A8B.23a">
    <molecule id="G5EEN4-1"/>
    <property type="protein sequence ID" value="CE38123"/>
    <property type="gene ID" value="WBGene00013355"/>
    <property type="gene designation" value="gck-3"/>
</dbReference>
<dbReference type="WormBase" id="Y59A8B.23b">
    <molecule id="G5EEN4-2"/>
    <property type="protein sequence ID" value="CE43021"/>
    <property type="gene ID" value="WBGene00013355"/>
    <property type="gene designation" value="gck-3"/>
</dbReference>
<dbReference type="WormBase" id="Y59A8B.23c">
    <molecule id="G5EEN4-3"/>
    <property type="protein sequence ID" value="CE46529"/>
    <property type="gene ID" value="WBGene00013355"/>
    <property type="gene designation" value="gck-3"/>
</dbReference>
<dbReference type="eggNOG" id="KOG0582">
    <property type="taxonomic scope" value="Eukaryota"/>
</dbReference>
<dbReference type="GeneTree" id="ENSGT00940000154621"/>
<dbReference type="HOGENOM" id="CLU_000288_111_2_1"/>
<dbReference type="InParanoid" id="G5EEN4"/>
<dbReference type="OMA" id="KMRTANC"/>
<dbReference type="OrthoDB" id="8693905at2759"/>
<dbReference type="PhylomeDB" id="G5EEN4"/>
<dbReference type="PRO" id="PR:G5EEN4"/>
<dbReference type="Proteomes" id="UP000001940">
    <property type="component" value="Chromosome V"/>
</dbReference>
<dbReference type="Bgee" id="WBGene00013355">
    <property type="expression patterns" value="Expressed in pharyngeal muscle cell (C elegans) and 3 other cell types or tissues"/>
</dbReference>
<dbReference type="GO" id="GO:0005737">
    <property type="term" value="C:cytoplasm"/>
    <property type="evidence" value="ECO:0000314"/>
    <property type="project" value="WormBase"/>
</dbReference>
<dbReference type="GO" id="GO:0005634">
    <property type="term" value="C:nucleus"/>
    <property type="evidence" value="ECO:0007669"/>
    <property type="project" value="UniProtKB-SubCell"/>
</dbReference>
<dbReference type="GO" id="GO:0005524">
    <property type="term" value="F:ATP binding"/>
    <property type="evidence" value="ECO:0007669"/>
    <property type="project" value="UniProtKB-KW"/>
</dbReference>
<dbReference type="GO" id="GO:0019901">
    <property type="term" value="F:protein kinase binding"/>
    <property type="evidence" value="ECO:0000353"/>
    <property type="project" value="UniProtKB"/>
</dbReference>
<dbReference type="GO" id="GO:0106310">
    <property type="term" value="F:protein serine kinase activity"/>
    <property type="evidence" value="ECO:0007669"/>
    <property type="project" value="RHEA"/>
</dbReference>
<dbReference type="GO" id="GO:0004674">
    <property type="term" value="F:protein serine/threonine kinase activity"/>
    <property type="evidence" value="ECO:0000314"/>
    <property type="project" value="WormBase"/>
</dbReference>
<dbReference type="GO" id="GO:0030154">
    <property type="term" value="P:cell differentiation"/>
    <property type="evidence" value="ECO:0007669"/>
    <property type="project" value="UniProtKB-KW"/>
</dbReference>
<dbReference type="GO" id="GO:0071474">
    <property type="term" value="P:cellular hyperosmotic response"/>
    <property type="evidence" value="ECO:0000318"/>
    <property type="project" value="GO_Central"/>
</dbReference>
<dbReference type="GO" id="GO:0060562">
    <property type="term" value="P:epithelial tube morphogenesis"/>
    <property type="evidence" value="ECO:0000315"/>
    <property type="project" value="WormBase"/>
</dbReference>
<dbReference type="GO" id="GO:0006972">
    <property type="term" value="P:hyperosmotic response"/>
    <property type="evidence" value="ECO:0000315"/>
    <property type="project" value="UniProtKB"/>
</dbReference>
<dbReference type="GO" id="GO:0035556">
    <property type="term" value="P:intracellular signal transduction"/>
    <property type="evidence" value="ECO:0000318"/>
    <property type="project" value="GO_Central"/>
</dbReference>
<dbReference type="GO" id="GO:0051321">
    <property type="term" value="P:meiotic cell cycle"/>
    <property type="evidence" value="ECO:0007669"/>
    <property type="project" value="UniProtKB-KW"/>
</dbReference>
<dbReference type="GO" id="GO:0050891">
    <property type="term" value="P:multicellular organismal-level water homeostasis"/>
    <property type="evidence" value="ECO:0000315"/>
    <property type="project" value="GO_Central"/>
</dbReference>
<dbReference type="GO" id="GO:0010628">
    <property type="term" value="P:positive regulation of gene expression"/>
    <property type="evidence" value="ECO:0000315"/>
    <property type="project" value="GO_Central"/>
</dbReference>
<dbReference type="GO" id="GO:0007283">
    <property type="term" value="P:spermatogenesis"/>
    <property type="evidence" value="ECO:0007669"/>
    <property type="project" value="UniProtKB-KW"/>
</dbReference>
<dbReference type="CDD" id="cd06610">
    <property type="entry name" value="STKc_OSR1_SPAK"/>
    <property type="match status" value="1"/>
</dbReference>
<dbReference type="FunFam" id="3.10.20.90:FF:000432">
    <property type="entry name" value="Protein CBR-GCK-3"/>
    <property type="match status" value="1"/>
</dbReference>
<dbReference type="FunFam" id="3.30.200.20:FF:000114">
    <property type="entry name" value="serine/threonine-protein kinase OSR1 isoform X1"/>
    <property type="match status" value="1"/>
</dbReference>
<dbReference type="FunFam" id="1.10.510.10:FF:000068">
    <property type="entry name" value="STE20/SPS1-related proline-alanine-rich protein kinase"/>
    <property type="match status" value="1"/>
</dbReference>
<dbReference type="Gene3D" id="3.10.20.90">
    <property type="entry name" value="Phosphatidylinositol 3-kinase Catalytic Subunit, Chain A, domain 1"/>
    <property type="match status" value="1"/>
</dbReference>
<dbReference type="Gene3D" id="3.30.200.20">
    <property type="entry name" value="Phosphorylase Kinase, domain 1"/>
    <property type="match status" value="1"/>
</dbReference>
<dbReference type="Gene3D" id="1.10.510.10">
    <property type="entry name" value="Transferase(Phosphotransferase) domain 1"/>
    <property type="match status" value="1"/>
</dbReference>
<dbReference type="InterPro" id="IPR011009">
    <property type="entry name" value="Kinase-like_dom_sf"/>
</dbReference>
<dbReference type="InterPro" id="IPR024678">
    <property type="entry name" value="Kinase_OSR1/WNK_CCT"/>
</dbReference>
<dbReference type="InterPro" id="IPR000719">
    <property type="entry name" value="Prot_kinase_dom"/>
</dbReference>
<dbReference type="InterPro" id="IPR017441">
    <property type="entry name" value="Protein_kinase_ATP_BS"/>
</dbReference>
<dbReference type="InterPro" id="IPR050629">
    <property type="entry name" value="STE20/SPS1-PAK"/>
</dbReference>
<dbReference type="PANTHER" id="PTHR48012:SF16">
    <property type="entry name" value="NON-SPECIFIC SERINE_THREONINE PROTEIN KINASE"/>
    <property type="match status" value="1"/>
</dbReference>
<dbReference type="PANTHER" id="PTHR48012">
    <property type="entry name" value="STERILE20-LIKE KINASE, ISOFORM B-RELATED"/>
    <property type="match status" value="1"/>
</dbReference>
<dbReference type="Pfam" id="PF12202">
    <property type="entry name" value="OSR1_C"/>
    <property type="match status" value="1"/>
</dbReference>
<dbReference type="Pfam" id="PF00069">
    <property type="entry name" value="Pkinase"/>
    <property type="match status" value="1"/>
</dbReference>
<dbReference type="SMART" id="SM00220">
    <property type="entry name" value="S_TKc"/>
    <property type="match status" value="1"/>
</dbReference>
<dbReference type="SUPFAM" id="SSF56112">
    <property type="entry name" value="Protein kinase-like (PK-like)"/>
    <property type="match status" value="1"/>
</dbReference>
<dbReference type="PROSITE" id="PS00107">
    <property type="entry name" value="PROTEIN_KINASE_ATP"/>
    <property type="match status" value="1"/>
</dbReference>
<dbReference type="PROSITE" id="PS50011">
    <property type="entry name" value="PROTEIN_KINASE_DOM"/>
    <property type="match status" value="1"/>
</dbReference>
<accession>G5EEN4</accession>
<accession>B5QSI7</accession>
<accession>F9UKV1</accession>